<accession>Q5UPH7</accession>
<organism>
    <name type="scientific">Acanthamoeba polyphaga mimivirus</name>
    <name type="common">APMV</name>
    <dbReference type="NCBI Taxonomy" id="212035"/>
    <lineage>
        <taxon>Viruses</taxon>
        <taxon>Varidnaviria</taxon>
        <taxon>Bamfordvirae</taxon>
        <taxon>Nucleocytoviricota</taxon>
        <taxon>Megaviricetes</taxon>
        <taxon>Imitervirales</taxon>
        <taxon>Mimiviridae</taxon>
        <taxon>Megamimivirinae</taxon>
        <taxon>Mimivirus</taxon>
        <taxon>Mimivirus bradfordmassiliense</taxon>
    </lineage>
</organism>
<sequence>MDKKKLFQYTLDGKFTDLELTLVDSNDTLTMHLHKVILSSSCPYFETMFSNSFSDSVSDKFRMEVINVYVMADIINSFYITDIERSQNLSEVDYQLLYTQSRNFLGLEHKIQNLEKIIFPENKFDKLLDTIDSCIGYNKETISILFYNMPMDYDLSKLPIKLLKKMSKISRYFILCIDSDRIELHNNHSCFSIGPVKLNYNCKLYKLLYSPIYHKYLMVNDTIHLIDTETDLSRISFDNNRYYCTNAVLSTDNRYVYSVYTNSTIRKFQTETTELIGVWYRDGMPIDTVNKNQGPITAFDDRPKKIMYSTPYDYIIVQYGTSLVCYKCLDMSIHWEMDNVHLPTLSQCEKYIVCLKGITGNQLCVIDIEKDSLKFGPILANCRYICNHDNTTVIIIHDYKISGSKIRVYDWVNNIFTYENESFNVSDITYIDHIENDNYIIVSHDIIDDSYISINKWNFKEDTTKLVTACYDNYSHKFYTITNFKAALQKRIKEYIDTNSN</sequence>
<comment type="similarity">
    <text evidence="2">Belongs to the mimivirus BTB/WD family.</text>
</comment>
<evidence type="ECO:0000255" key="1">
    <source>
        <dbReference type="PROSITE-ProRule" id="PRU00037"/>
    </source>
</evidence>
<evidence type="ECO:0000305" key="2"/>
<dbReference type="EMBL" id="AY653733">
    <property type="protein sequence ID" value="AAV50382.1"/>
    <property type="molecule type" value="Genomic_DNA"/>
</dbReference>
<dbReference type="SMR" id="Q5UPH7"/>
<dbReference type="KEGG" id="vg:9924705"/>
<dbReference type="OrthoDB" id="7868at10239"/>
<dbReference type="Proteomes" id="UP000001134">
    <property type="component" value="Genome"/>
</dbReference>
<dbReference type="CDD" id="cd18186">
    <property type="entry name" value="BTB_POZ_ZBTB_KLHL-like"/>
    <property type="match status" value="1"/>
</dbReference>
<dbReference type="Gene3D" id="3.30.710.10">
    <property type="entry name" value="Potassium Channel Kv1.1, Chain A"/>
    <property type="match status" value="1"/>
</dbReference>
<dbReference type="InterPro" id="IPR000210">
    <property type="entry name" value="BTB/POZ_dom"/>
</dbReference>
<dbReference type="InterPro" id="IPR011333">
    <property type="entry name" value="SKP1/BTB/POZ_sf"/>
</dbReference>
<dbReference type="Pfam" id="PF00651">
    <property type="entry name" value="BTB"/>
    <property type="match status" value="1"/>
</dbReference>
<dbReference type="SUPFAM" id="SSF82171">
    <property type="entry name" value="DPP6 N-terminal domain-like"/>
    <property type="match status" value="1"/>
</dbReference>
<dbReference type="SUPFAM" id="SSF54695">
    <property type="entry name" value="POZ domain"/>
    <property type="match status" value="1"/>
</dbReference>
<dbReference type="PROSITE" id="PS50097">
    <property type="entry name" value="BTB"/>
    <property type="match status" value="1"/>
</dbReference>
<protein>
    <recommendedName>
        <fullName>Putative BTB/POZ domain-containing protein L107</fullName>
    </recommendedName>
</protein>
<feature type="chain" id="PRO_0000186229" description="Putative BTB/POZ domain-containing protein L107">
    <location>
        <begin position="1"/>
        <end position="501"/>
    </location>
</feature>
<feature type="domain" description="BTB" evidence="1">
    <location>
        <begin position="16"/>
        <end position="87"/>
    </location>
</feature>
<gene>
    <name type="ordered locus">MIMI_L107</name>
</gene>
<proteinExistence type="inferred from homology"/>
<keyword id="KW-1185">Reference proteome</keyword>
<organismHost>
    <name type="scientific">Acanthamoeba polyphaga</name>
    <name type="common">Amoeba</name>
    <dbReference type="NCBI Taxonomy" id="5757"/>
</organismHost>
<name>YL107_MIMIV</name>
<reference key="1">
    <citation type="journal article" date="2004" name="Science">
        <title>The 1.2-megabase genome sequence of Mimivirus.</title>
        <authorList>
            <person name="Raoult D."/>
            <person name="Audic S."/>
            <person name="Robert C."/>
            <person name="Abergel C."/>
            <person name="Renesto P."/>
            <person name="Ogata H."/>
            <person name="La Scola B."/>
            <person name="Susan M."/>
            <person name="Claverie J.-M."/>
        </authorList>
    </citation>
    <scope>NUCLEOTIDE SEQUENCE [LARGE SCALE GENOMIC DNA]</scope>
    <source>
        <strain>Rowbotham-Bradford</strain>
    </source>
</reference>